<dbReference type="EC" id="1.-.-.-" evidence="4"/>
<dbReference type="EMBL" id="BKZM02000003">
    <property type="protein sequence ID" value="GES59608.1"/>
    <property type="molecule type" value="Genomic_DNA"/>
</dbReference>
<dbReference type="EMBL" id="MN699961">
    <property type="protein sequence ID" value="QIH14019.1"/>
    <property type="molecule type" value="Genomic_DNA"/>
</dbReference>
<dbReference type="VEuPathDB" id="FungiDB:ATEG_00912"/>
<dbReference type="OrthoDB" id="63935at2759"/>
<dbReference type="GO" id="GO:0004074">
    <property type="term" value="F:biliverdin reductase [NAD(P)+] activity"/>
    <property type="evidence" value="ECO:0007669"/>
    <property type="project" value="TreeGrafter"/>
</dbReference>
<dbReference type="GO" id="GO:0042602">
    <property type="term" value="F:riboflavin reductase (NADPH) activity"/>
    <property type="evidence" value="ECO:0007669"/>
    <property type="project" value="TreeGrafter"/>
</dbReference>
<dbReference type="Gene3D" id="3.40.50.720">
    <property type="entry name" value="NAD(P)-binding Rossmann-like Domain"/>
    <property type="match status" value="1"/>
</dbReference>
<dbReference type="InterPro" id="IPR016040">
    <property type="entry name" value="NAD(P)-bd_dom"/>
</dbReference>
<dbReference type="InterPro" id="IPR036291">
    <property type="entry name" value="NAD(P)-bd_dom_sf"/>
</dbReference>
<dbReference type="InterPro" id="IPR051606">
    <property type="entry name" value="Polyketide_Oxido-like"/>
</dbReference>
<dbReference type="PANTHER" id="PTHR43355">
    <property type="entry name" value="FLAVIN REDUCTASE (NADPH)"/>
    <property type="match status" value="1"/>
</dbReference>
<dbReference type="PANTHER" id="PTHR43355:SF2">
    <property type="entry name" value="FLAVIN REDUCTASE (NADPH)"/>
    <property type="match status" value="1"/>
</dbReference>
<dbReference type="Pfam" id="PF13460">
    <property type="entry name" value="NAD_binding_10"/>
    <property type="match status" value="1"/>
</dbReference>
<dbReference type="SUPFAM" id="SSF51735">
    <property type="entry name" value="NAD(P)-binding Rossmann-fold domains"/>
    <property type="match status" value="1"/>
</dbReference>
<evidence type="ECO:0000269" key="1">
    <source>
    </source>
</evidence>
<evidence type="ECO:0000303" key="2">
    <source>
    </source>
</evidence>
<evidence type="ECO:0000305" key="3"/>
<evidence type="ECO:0000305" key="4">
    <source>
    </source>
</evidence>
<gene>
    <name evidence="2" type="primary">pytE</name>
    <name type="ORF">ATETN484_0003083400</name>
    <name type="ORF">g7169</name>
</gene>
<feature type="chain" id="PRO_0000450470" description="Reductase pytE">
    <location>
        <begin position="1"/>
        <end position="263"/>
    </location>
</feature>
<proteinExistence type="evidence at transcript level"/>
<comment type="function">
    <text evidence="1 4">Reductase; part of the gene cluster that mediates the biosynthesis of pyranterreones, a family of antioxidative compounds (PubMed:32077283). The first step of pyranonigrins biosynthesis is performed by the hybrid PKS-NRPS synthetase pytA that condenses 4 malonyl-CoA units ato the acetyl starter unit by the modular PKS of pytA (PubMed:32077283). The acyl chain is then connected to an L-serine through the amide bond by the modular NRPS of pytA (PubMed:32077283). A tetramic acid is formed and released from the PKS-NRPS pytA to give pyranterreone 5 with the help of the thioesterase pytI (PubMed:32077283). Pyranterreone 5 could be methylated by pytC to afford pyranterreone 6 (Probable). Both pyranterreones 5 and 6 are subsequently oxidized by the FAD-linked oxidoreductase pytB and the cytochrome P450 monooxygenase pytD to form the fused gamma-pyrone core, resulting in pyranterreones 7 and 11, respectively (PubMed:32077283). The hydroxy group at C-8 of pyranterreones 7 and 11 are dehydrated by the aspartyl protease pytH to form a delta-7 double bond to give pyranterreones 3 and 1, 2 accordingly (PubMed:32077283). The exo-methylene of pyranterreone 3 could be reduced into a pendant methyl by reductase pytE to provide pyranterreone 4, also known as cordylactam (Probable). Pyranterreone 4 can be reconverted to pyranterreone 3 through pytB-catalyzed dehydrogenation or further oxidized to pyranterreones 9 and 10 (Probable).</text>
</comment>
<comment type="pathway">
    <text evidence="1">Secondary metabolite biosynthesis.</text>
</comment>
<comment type="induction">
    <text evidence="1">Expression is positively regulated by the cluster-specific transcription factor pytR.</text>
</comment>
<comment type="disruption phenotype">
    <text evidence="1">Abolishes the production of pyranterreone 4, but accumulates pyranterreone 3.</text>
</comment>
<comment type="similarity">
    <text evidence="3">Belongs to the avfA family.</text>
</comment>
<keyword id="KW-0560">Oxidoreductase</keyword>
<sequence length="263" mass="28441">MSSSKPTIAFFGATGGSTISCLAPALKAGYRCAALARTPSRLRDLLVQRGVSESTIADNLTIVSGTATDLQPVKQTLQMGRPASDMADLIVSGIGGKLIMSNPLSPTLDNPTICQDVVRNILTAIRELRDTGTTKAPFLITLSTTGISEVKRDLPIAMMPMYHWMLKVPHDDKKVMERLIVDDAERDPAARALGGYVIVRPSLLTDGDRDKGGDLKKIRVGVEEAPAVGYTISREDVGRWVFEHLVKKGRESEYAGKAVTITY</sequence>
<protein>
    <recommendedName>
        <fullName evidence="2">Reductase pytE</fullName>
        <ecNumber evidence="4">1.-.-.-</ecNumber>
    </recommendedName>
    <alternativeName>
        <fullName evidence="2">Pyranterreones biosynthesis cluster protein E</fullName>
    </alternativeName>
</protein>
<name>PYTE_ASPTE</name>
<reference key="1">
    <citation type="submission" date="2019-10" db="EMBL/GenBank/DDBJ databases">
        <title>Aspergillus terreus TN-484 whole genome shotgun sequence.</title>
        <authorList>
            <person name="Kanamasa S."/>
            <person name="Takahashi H."/>
        </authorList>
    </citation>
    <scope>NUCLEOTIDE SEQUENCE [GENOMIC DNA]</scope>
    <source>
        <strain>TN-484</strain>
    </source>
</reference>
<reference key="2">
    <citation type="journal article" date="2020" name="J. Nat. Prod.">
        <title>Discovery and characterization of a PKS-NRPS hybrid in Aspergillus terreus by genome mining.</title>
        <authorList>
            <person name="Tang S."/>
            <person name="Zhang W."/>
            <person name="Li Z."/>
            <person name="Li H."/>
            <person name="Geng C."/>
            <person name="Huang X."/>
            <person name="Lu X."/>
        </authorList>
    </citation>
    <scope>NUCLEOTIDE SEQUENCE [GENOMIC DNA]</scope>
    <scope>INDUCTION</scope>
    <scope>FUNCTION</scope>
    <scope>DISRUPTION PHENOTYPE</scope>
    <scope>PATHWAY</scope>
    <source>
        <strain>MEFC01</strain>
    </source>
</reference>
<organism>
    <name type="scientific">Aspergillus terreus</name>
    <dbReference type="NCBI Taxonomy" id="33178"/>
    <lineage>
        <taxon>Eukaryota</taxon>
        <taxon>Fungi</taxon>
        <taxon>Dikarya</taxon>
        <taxon>Ascomycota</taxon>
        <taxon>Pezizomycotina</taxon>
        <taxon>Eurotiomycetes</taxon>
        <taxon>Eurotiomycetidae</taxon>
        <taxon>Eurotiales</taxon>
        <taxon>Aspergillaceae</taxon>
        <taxon>Aspergillus</taxon>
        <taxon>Aspergillus subgen. Circumdati</taxon>
    </lineage>
</organism>
<accession>P9WEZ2</accession>
<accession>A0A5M3YUD2</accession>